<protein>
    <recommendedName>
        <fullName>Uncharacterized RNA-binding protein C25G10.01</fullName>
    </recommendedName>
</protein>
<evidence type="ECO:0000255" key="1">
    <source>
        <dbReference type="PROSITE-ProRule" id="PRU00176"/>
    </source>
</evidence>
<evidence type="ECO:0000256" key="2">
    <source>
        <dbReference type="SAM" id="MobiDB-lite"/>
    </source>
</evidence>
<evidence type="ECO:0000269" key="3">
    <source>
    </source>
</evidence>
<evidence type="ECO:0000269" key="4">
    <source>
    </source>
</evidence>
<proteinExistence type="evidence at protein level"/>
<keyword id="KW-0539">Nucleus</keyword>
<keyword id="KW-0597">Phosphoprotein</keyword>
<keyword id="KW-1185">Reference proteome</keyword>
<keyword id="KW-0694">RNA-binding</keyword>
<feature type="chain" id="PRO_0000082023" description="Uncharacterized RNA-binding protein C25G10.01">
    <location>
        <begin position="1"/>
        <end position="297"/>
    </location>
</feature>
<feature type="domain" description="RRM" evidence="1">
    <location>
        <begin position="101"/>
        <end position="179"/>
    </location>
</feature>
<feature type="region of interest" description="Disordered" evidence="2">
    <location>
        <begin position="1"/>
        <end position="20"/>
    </location>
</feature>
<feature type="region of interest" description="Disordered" evidence="2">
    <location>
        <begin position="39"/>
        <end position="100"/>
    </location>
</feature>
<feature type="region of interest" description="Disordered" evidence="2">
    <location>
        <begin position="174"/>
        <end position="297"/>
    </location>
</feature>
<feature type="compositionally biased region" description="Basic and acidic residues" evidence="2">
    <location>
        <begin position="209"/>
        <end position="223"/>
    </location>
</feature>
<feature type="compositionally biased region" description="Basic and acidic residues" evidence="2">
    <location>
        <begin position="233"/>
        <end position="253"/>
    </location>
</feature>
<feature type="compositionally biased region" description="Basic residues" evidence="2">
    <location>
        <begin position="254"/>
        <end position="263"/>
    </location>
</feature>
<feature type="compositionally biased region" description="Polar residues" evidence="2">
    <location>
        <begin position="287"/>
        <end position="297"/>
    </location>
</feature>
<feature type="modified residue" description="Phosphoserine" evidence="4">
    <location>
        <position position="184"/>
    </location>
</feature>
<organism>
    <name type="scientific">Schizosaccharomyces pombe (strain 972 / ATCC 24843)</name>
    <name type="common">Fission yeast</name>
    <dbReference type="NCBI Taxonomy" id="284812"/>
    <lineage>
        <taxon>Eukaryota</taxon>
        <taxon>Fungi</taxon>
        <taxon>Dikarya</taxon>
        <taxon>Ascomycota</taxon>
        <taxon>Taphrinomycotina</taxon>
        <taxon>Schizosaccharomycetes</taxon>
        <taxon>Schizosaccharomycetales</taxon>
        <taxon>Schizosaccharomycetaceae</taxon>
        <taxon>Schizosaccharomyces</taxon>
    </lineage>
</organism>
<reference key="1">
    <citation type="journal article" date="2002" name="Nature">
        <title>The genome sequence of Schizosaccharomyces pombe.</title>
        <authorList>
            <person name="Wood V."/>
            <person name="Gwilliam R."/>
            <person name="Rajandream M.A."/>
            <person name="Lyne M.H."/>
            <person name="Lyne R."/>
            <person name="Stewart A."/>
            <person name="Sgouros J.G."/>
            <person name="Peat N."/>
            <person name="Hayles J."/>
            <person name="Baker S.G."/>
            <person name="Basham D."/>
            <person name="Bowman S."/>
            <person name="Brooks K."/>
            <person name="Brown D."/>
            <person name="Brown S."/>
            <person name="Chillingworth T."/>
            <person name="Churcher C.M."/>
            <person name="Collins M."/>
            <person name="Connor R."/>
            <person name="Cronin A."/>
            <person name="Davis P."/>
            <person name="Feltwell T."/>
            <person name="Fraser A."/>
            <person name="Gentles S."/>
            <person name="Goble A."/>
            <person name="Hamlin N."/>
            <person name="Harris D.E."/>
            <person name="Hidalgo J."/>
            <person name="Hodgson G."/>
            <person name="Holroyd S."/>
            <person name="Hornsby T."/>
            <person name="Howarth S."/>
            <person name="Huckle E.J."/>
            <person name="Hunt S."/>
            <person name="Jagels K."/>
            <person name="James K.D."/>
            <person name="Jones L."/>
            <person name="Jones M."/>
            <person name="Leather S."/>
            <person name="McDonald S."/>
            <person name="McLean J."/>
            <person name="Mooney P."/>
            <person name="Moule S."/>
            <person name="Mungall K.L."/>
            <person name="Murphy L.D."/>
            <person name="Niblett D."/>
            <person name="Odell C."/>
            <person name="Oliver K."/>
            <person name="O'Neil S."/>
            <person name="Pearson D."/>
            <person name="Quail M.A."/>
            <person name="Rabbinowitsch E."/>
            <person name="Rutherford K.M."/>
            <person name="Rutter S."/>
            <person name="Saunders D."/>
            <person name="Seeger K."/>
            <person name="Sharp S."/>
            <person name="Skelton J."/>
            <person name="Simmonds M.N."/>
            <person name="Squares R."/>
            <person name="Squares S."/>
            <person name="Stevens K."/>
            <person name="Taylor K."/>
            <person name="Taylor R.G."/>
            <person name="Tivey A."/>
            <person name="Walsh S.V."/>
            <person name="Warren T."/>
            <person name="Whitehead S."/>
            <person name="Woodward J.R."/>
            <person name="Volckaert G."/>
            <person name="Aert R."/>
            <person name="Robben J."/>
            <person name="Grymonprez B."/>
            <person name="Weltjens I."/>
            <person name="Vanstreels E."/>
            <person name="Rieger M."/>
            <person name="Schaefer M."/>
            <person name="Mueller-Auer S."/>
            <person name="Gabel C."/>
            <person name="Fuchs M."/>
            <person name="Duesterhoeft A."/>
            <person name="Fritzc C."/>
            <person name="Holzer E."/>
            <person name="Moestl D."/>
            <person name="Hilbert H."/>
            <person name="Borzym K."/>
            <person name="Langer I."/>
            <person name="Beck A."/>
            <person name="Lehrach H."/>
            <person name="Reinhardt R."/>
            <person name="Pohl T.M."/>
            <person name="Eger P."/>
            <person name="Zimmermann W."/>
            <person name="Wedler H."/>
            <person name="Wambutt R."/>
            <person name="Purnelle B."/>
            <person name="Goffeau A."/>
            <person name="Cadieu E."/>
            <person name="Dreano S."/>
            <person name="Gloux S."/>
            <person name="Lelaure V."/>
            <person name="Mottier S."/>
            <person name="Galibert F."/>
            <person name="Aves S.J."/>
            <person name="Xiang Z."/>
            <person name="Hunt C."/>
            <person name="Moore K."/>
            <person name="Hurst S.M."/>
            <person name="Lucas M."/>
            <person name="Rochet M."/>
            <person name="Gaillardin C."/>
            <person name="Tallada V.A."/>
            <person name="Garzon A."/>
            <person name="Thode G."/>
            <person name="Daga R.R."/>
            <person name="Cruzado L."/>
            <person name="Jimenez J."/>
            <person name="Sanchez M."/>
            <person name="del Rey F."/>
            <person name="Benito J."/>
            <person name="Dominguez A."/>
            <person name="Revuelta J.L."/>
            <person name="Moreno S."/>
            <person name="Armstrong J."/>
            <person name="Forsburg S.L."/>
            <person name="Cerutti L."/>
            <person name="Lowe T."/>
            <person name="McCombie W.R."/>
            <person name="Paulsen I."/>
            <person name="Potashkin J."/>
            <person name="Shpakovski G.V."/>
            <person name="Ussery D."/>
            <person name="Barrell B.G."/>
            <person name="Nurse P."/>
        </authorList>
    </citation>
    <scope>NUCLEOTIDE SEQUENCE [LARGE SCALE GENOMIC DNA]</scope>
    <source>
        <strain>972 / ATCC 24843</strain>
    </source>
</reference>
<reference key="2">
    <citation type="journal article" date="2006" name="Nat. Biotechnol.">
        <title>ORFeome cloning and global analysis of protein localization in the fission yeast Schizosaccharomyces pombe.</title>
        <authorList>
            <person name="Matsuyama A."/>
            <person name="Arai R."/>
            <person name="Yashiroda Y."/>
            <person name="Shirai A."/>
            <person name="Kamata A."/>
            <person name="Sekido S."/>
            <person name="Kobayashi Y."/>
            <person name="Hashimoto A."/>
            <person name="Hamamoto M."/>
            <person name="Hiraoka Y."/>
            <person name="Horinouchi S."/>
            <person name="Yoshida M."/>
        </authorList>
    </citation>
    <scope>SUBCELLULAR LOCATION [LARGE SCALE ANALYSIS]</scope>
</reference>
<reference key="3">
    <citation type="journal article" date="2008" name="J. Proteome Res.">
        <title>Phosphoproteome analysis of fission yeast.</title>
        <authorList>
            <person name="Wilson-Grady J.T."/>
            <person name="Villen J."/>
            <person name="Gygi S.P."/>
        </authorList>
    </citation>
    <scope>PHOSPHORYLATION [LARGE SCALE ANALYSIS] AT SER-184</scope>
    <scope>IDENTIFICATION BY MASS SPECTROMETRY</scope>
</reference>
<accession>Q10422</accession>
<accession>Q7LGI7</accession>
<name>YDC1_SCHPO</name>
<gene>
    <name type="ORF">SPAC25G10.01</name>
    <name type="ORF">SPAC2C4.18</name>
</gene>
<dbReference type="EMBL" id="CU329670">
    <property type="protein sequence ID" value="CAB16378.2"/>
    <property type="molecule type" value="Genomic_DNA"/>
</dbReference>
<dbReference type="PIR" id="T38372">
    <property type="entry name" value="T38372"/>
</dbReference>
<dbReference type="RefSeq" id="XP_001713104.1">
    <property type="nucleotide sequence ID" value="XM_001713052.2"/>
</dbReference>
<dbReference type="SMR" id="Q10422"/>
<dbReference type="BioGRID" id="280488">
    <property type="interactions" value="7"/>
</dbReference>
<dbReference type="FunCoup" id="Q10422">
    <property type="interactions" value="667"/>
</dbReference>
<dbReference type="STRING" id="284812.Q10422"/>
<dbReference type="iPTMnet" id="Q10422"/>
<dbReference type="PaxDb" id="4896-SPAC25G10.01.1"/>
<dbReference type="EnsemblFungi" id="SPAC25G10.01.1">
    <property type="protein sequence ID" value="SPAC25G10.01.1:pep"/>
    <property type="gene ID" value="SPAC25G10.01"/>
</dbReference>
<dbReference type="PomBase" id="SPAC25G10.01"/>
<dbReference type="VEuPathDB" id="FungiDB:SPAC25G10.01"/>
<dbReference type="eggNOG" id="ENOG502S146">
    <property type="taxonomic scope" value="Eukaryota"/>
</dbReference>
<dbReference type="HOGENOM" id="CLU_937377_0_0_1"/>
<dbReference type="InParanoid" id="Q10422"/>
<dbReference type="PhylomeDB" id="Q10422"/>
<dbReference type="PRO" id="PR:Q10422"/>
<dbReference type="Proteomes" id="UP000002485">
    <property type="component" value="Chromosome I"/>
</dbReference>
<dbReference type="GO" id="GO:0005634">
    <property type="term" value="C:nucleus"/>
    <property type="evidence" value="ECO:0007005"/>
    <property type="project" value="PomBase"/>
</dbReference>
<dbReference type="GO" id="GO:0003723">
    <property type="term" value="F:RNA binding"/>
    <property type="evidence" value="ECO:0000303"/>
    <property type="project" value="PomBase"/>
</dbReference>
<dbReference type="GO" id="GO:0045292">
    <property type="term" value="P:mRNA cis splicing, via spliceosome"/>
    <property type="evidence" value="ECO:0000266"/>
    <property type="project" value="PomBase"/>
</dbReference>
<dbReference type="CDD" id="cd00590">
    <property type="entry name" value="RRM_SF"/>
    <property type="match status" value="1"/>
</dbReference>
<dbReference type="Gene3D" id="3.30.70.330">
    <property type="match status" value="1"/>
</dbReference>
<dbReference type="InterPro" id="IPR012677">
    <property type="entry name" value="Nucleotide-bd_a/b_plait_sf"/>
</dbReference>
<dbReference type="InterPro" id="IPR035979">
    <property type="entry name" value="RBD_domain_sf"/>
</dbReference>
<dbReference type="InterPro" id="IPR000504">
    <property type="entry name" value="RRM_dom"/>
</dbReference>
<dbReference type="PANTHER" id="PTHR48033">
    <property type="entry name" value="RNA-BINDING (RRM/RBD/RNP MOTIFS) FAMILY PROTEIN"/>
    <property type="match status" value="1"/>
</dbReference>
<dbReference type="PANTHER" id="PTHR48033:SF10">
    <property type="entry name" value="RNA-BINDING PROTEIN SQUID"/>
    <property type="match status" value="1"/>
</dbReference>
<dbReference type="Pfam" id="PF00076">
    <property type="entry name" value="RRM_1"/>
    <property type="match status" value="1"/>
</dbReference>
<dbReference type="SMART" id="SM00360">
    <property type="entry name" value="RRM"/>
    <property type="match status" value="1"/>
</dbReference>
<dbReference type="SUPFAM" id="SSF54928">
    <property type="entry name" value="RNA-binding domain, RBD"/>
    <property type="match status" value="1"/>
</dbReference>
<dbReference type="PROSITE" id="PS50102">
    <property type="entry name" value="RRM"/>
    <property type="match status" value="1"/>
</dbReference>
<sequence>MDTLPPATSEESFEIPNADVAGSAVLETETSQDIHQLEIEKDAGETDSDAGSIAMNVHQLDTAGEPLQSMNEDEVDPNNESTALDKKEPQSAPEGSENLGNDLFVSGIASRMQEDELQQIFSKFGTVTHVRIMREPVTKASRGFGFLSFSTVEEATSAIDNLNSQEFYGRVLNVQKAKRSRPHSPTPGKYMGYDRRRNSRDFPSNNKDGGYRRNNYRDRDSNRYRNSYRPSRPQREHSPGNYRKERYNVDSRPRRERHFHGRSFAHAEHHSVPNMRNDTPGNEALPSHSSVPPNEDQ</sequence>
<comment type="subcellular location">
    <subcellularLocation>
        <location evidence="3">Nucleus</location>
    </subcellularLocation>
</comment>